<feature type="chain" id="PRO_0000324437" description="Protein YAE1">
    <location>
        <begin position="1"/>
        <end position="141"/>
    </location>
</feature>
<feature type="region of interest" description="deca-GX3 motif; required for interaction with LTO1" evidence="1">
    <location>
        <begin position="34"/>
        <end position="74"/>
    </location>
</feature>
<organism>
    <name type="scientific">Saccharomyces cerevisiae (strain YJM789)</name>
    <name type="common">Baker's yeast</name>
    <dbReference type="NCBI Taxonomy" id="307796"/>
    <lineage>
        <taxon>Eukaryota</taxon>
        <taxon>Fungi</taxon>
        <taxon>Dikarya</taxon>
        <taxon>Ascomycota</taxon>
        <taxon>Saccharomycotina</taxon>
        <taxon>Saccharomycetes</taxon>
        <taxon>Saccharomycetales</taxon>
        <taxon>Saccharomycetaceae</taxon>
        <taxon>Saccharomyces</taxon>
    </lineage>
</organism>
<sequence>MSNTWDDVWASDSDVETERSPDLLKLRENHSKRGYLDGIVSSKEEKLQEGFNDGFPTGAKLGKQVGIIMGILLGLRTRFGDEDEGLSKAYIDAQKELRINKVLSKSIFDPNFDLQEKHPLITKWTDIVNTYCEKYHVPSIQ</sequence>
<proteinExistence type="inferred from homology"/>
<keyword id="KW-0963">Cytoplasm</keyword>
<keyword id="KW-0539">Nucleus</keyword>
<comment type="function">
    <text evidence="2">The complex LTO1:YAE1 may function as a target specific adapter that probably recruits apo-RPLI1 to the cytosolic iron-sulfur protein assembly (CIA) complex machinery. May be required for biogenesis of the large ribosomal subunit and initiation of translation.</text>
</comment>
<comment type="subunit">
    <text evidence="2">May form a complex with LTO1.</text>
</comment>
<comment type="subcellular location">
    <subcellularLocation>
        <location evidence="1">Cytoplasm</location>
    </subcellularLocation>
    <subcellularLocation>
        <location evidence="1">Nucleus</location>
    </subcellularLocation>
</comment>
<comment type="similarity">
    <text evidence="3">Belongs to the YAE1 family.</text>
</comment>
<protein>
    <recommendedName>
        <fullName>Protein YAE1</fullName>
    </recommendedName>
</protein>
<evidence type="ECO:0000250" key="1">
    <source>
        <dbReference type="UniProtKB" id="P47118"/>
    </source>
</evidence>
<evidence type="ECO:0000250" key="2">
    <source>
        <dbReference type="UniProtKB" id="Q9NRH1"/>
    </source>
</evidence>
<evidence type="ECO:0000305" key="3"/>
<accession>A6ZQ26</accession>
<reference key="1">
    <citation type="journal article" date="2007" name="Proc. Natl. Acad. Sci. U.S.A.">
        <title>Genome sequencing and comparative analysis of Saccharomyces cerevisiae strain YJM789.</title>
        <authorList>
            <person name="Wei W."/>
            <person name="McCusker J.H."/>
            <person name="Hyman R.W."/>
            <person name="Jones T."/>
            <person name="Ning Y."/>
            <person name="Cao Z."/>
            <person name="Gu Z."/>
            <person name="Bruno D."/>
            <person name="Miranda M."/>
            <person name="Nguyen M."/>
            <person name="Wilhelmy J."/>
            <person name="Komp C."/>
            <person name="Tamse R."/>
            <person name="Wang X."/>
            <person name="Jia P."/>
            <person name="Luedi P."/>
            <person name="Oefner P.J."/>
            <person name="David L."/>
            <person name="Dietrich F.S."/>
            <person name="Li Y."/>
            <person name="Davis R.W."/>
            <person name="Steinmetz L.M."/>
        </authorList>
    </citation>
    <scope>NUCLEOTIDE SEQUENCE [LARGE SCALE GENOMIC DNA]</scope>
    <source>
        <strain>YJM789</strain>
    </source>
</reference>
<name>YAE1_YEAS7</name>
<gene>
    <name type="primary">YAE1</name>
    <name type="ORF">SCY_2987</name>
</gene>
<dbReference type="EMBL" id="AAFW02000040">
    <property type="protein sequence ID" value="EDN63386.1"/>
    <property type="molecule type" value="Genomic_DNA"/>
</dbReference>
<dbReference type="HOGENOM" id="CLU_066684_2_0_1"/>
<dbReference type="Proteomes" id="UP000007060">
    <property type="component" value="Unassembled WGS sequence"/>
</dbReference>
<dbReference type="GO" id="GO:0005737">
    <property type="term" value="C:cytoplasm"/>
    <property type="evidence" value="ECO:0007669"/>
    <property type="project" value="UniProtKB-SubCell"/>
</dbReference>
<dbReference type="GO" id="GO:0005634">
    <property type="term" value="C:nucleus"/>
    <property type="evidence" value="ECO:0007669"/>
    <property type="project" value="UniProtKB-SubCell"/>
</dbReference>
<dbReference type="GO" id="GO:0051604">
    <property type="term" value="P:protein maturation"/>
    <property type="evidence" value="ECO:0000250"/>
    <property type="project" value="UniProtKB"/>
</dbReference>
<dbReference type="InterPro" id="IPR019191">
    <property type="entry name" value="Essential_protein_Yae1_N"/>
</dbReference>
<dbReference type="InterPro" id="IPR038881">
    <property type="entry name" value="Yae1-like"/>
</dbReference>
<dbReference type="PANTHER" id="PTHR18829">
    <property type="entry name" value="PROTEIN YAE1 HOMOLOG"/>
    <property type="match status" value="1"/>
</dbReference>
<dbReference type="PANTHER" id="PTHR18829:SF0">
    <property type="entry name" value="PROTEIN YAE1 HOMOLOG"/>
    <property type="match status" value="1"/>
</dbReference>
<dbReference type="Pfam" id="PF09811">
    <property type="entry name" value="Yae1_N"/>
    <property type="match status" value="1"/>
</dbReference>